<proteinExistence type="inferred from homology"/>
<reference key="1">
    <citation type="submission" date="2003-03" db="EMBL/GenBank/DDBJ databases">
        <title>African swine fever virus genomes.</title>
        <authorList>
            <person name="Kutish G.F."/>
            <person name="Rock D.L."/>
        </authorList>
    </citation>
    <scope>NUCLEOTIDE SEQUENCE [LARGE SCALE GENOMIC DNA]</scope>
</reference>
<accession>P0C9N0</accession>
<name>3604L_ASFP4</name>
<feature type="chain" id="PRO_0000373256" description="Protein MGF 360-4L">
    <location>
        <begin position="1"/>
        <end position="375"/>
    </location>
</feature>
<comment type="function">
    <text evidence="1">Plays a role in virus cell tropism, and may be required for efficient virus replication in macrophages.</text>
</comment>
<comment type="similarity">
    <text evidence="2">Belongs to the asfivirus MGF 360 family.</text>
</comment>
<dbReference type="EMBL" id="AY261363">
    <property type="status" value="NOT_ANNOTATED_CDS"/>
    <property type="molecule type" value="Genomic_DNA"/>
</dbReference>
<dbReference type="SMR" id="P0C9N0"/>
<dbReference type="Proteomes" id="UP000000859">
    <property type="component" value="Segment"/>
</dbReference>
<dbReference type="GO" id="GO:0042330">
    <property type="term" value="P:taxis"/>
    <property type="evidence" value="ECO:0007669"/>
    <property type="project" value="InterPro"/>
</dbReference>
<dbReference type="InterPro" id="IPR002595">
    <property type="entry name" value="ASFV_MGF360"/>
</dbReference>
<dbReference type="Pfam" id="PF01671">
    <property type="entry name" value="ASFV_360"/>
    <property type="match status" value="1"/>
</dbReference>
<sequence>MNSLQVLTKKVLIENKAFSNYHEDDIFILQQLGLWWHNGPIGFCKQCKMVTSGSMSCSDVDSYELDRALVRAVKKNQTDLIKLFVLWGANINYGIICAKTERTKVLCIQLGADPKFLDVGLYNLFVDLIKQQKVLLAIDIYYDNISILDRFDSHDFYVLIDFIYNCFILNLDEKEKMIKNTYVLKFWFKIAIEFNLIKPIRFLSKKFPHLDDWRLKTAVYLGNVDEIHHAYFQENIRLDPNDMMPLACMYPQNKLGIYYCFALGANINTALETLIRYINHEVNGEITFFSNYGIWSNVHFCISLGANPYTKKIQETLLRQEKNVIMKLLFRKGLLSPHSILHKKILEPSEVRKIISTYEYTETFHSFSLLRDNLR</sequence>
<protein>
    <recommendedName>
        <fullName>Protein MGF 360-4L</fullName>
    </recommendedName>
</protein>
<gene>
    <name type="ordered locus">Pret-024</name>
</gene>
<organismHost>
    <name type="scientific">Ornithodoros</name>
    <name type="common">relapsing fever ticks</name>
    <dbReference type="NCBI Taxonomy" id="6937"/>
</organismHost>
<organismHost>
    <name type="scientific">Phacochoerus aethiopicus</name>
    <name type="common">Warthog</name>
    <dbReference type="NCBI Taxonomy" id="85517"/>
</organismHost>
<organismHost>
    <name type="scientific">Phacochoerus africanus</name>
    <name type="common">Warthog</name>
    <dbReference type="NCBI Taxonomy" id="41426"/>
</organismHost>
<organismHost>
    <name type="scientific">Potamochoerus larvatus</name>
    <name type="common">Bushpig</name>
    <dbReference type="NCBI Taxonomy" id="273792"/>
</organismHost>
<organismHost>
    <name type="scientific">Sus scrofa</name>
    <name type="common">Pig</name>
    <dbReference type="NCBI Taxonomy" id="9823"/>
</organismHost>
<organism>
    <name type="scientific">African swine fever virus (isolate Tick/South Africa/Pretoriuskop Pr4/1996)</name>
    <name type="common">ASFV</name>
    <dbReference type="NCBI Taxonomy" id="561443"/>
    <lineage>
        <taxon>Viruses</taxon>
        <taxon>Varidnaviria</taxon>
        <taxon>Bamfordvirae</taxon>
        <taxon>Nucleocytoviricota</taxon>
        <taxon>Pokkesviricetes</taxon>
        <taxon>Asfuvirales</taxon>
        <taxon>Asfarviridae</taxon>
        <taxon>Asfivirus</taxon>
        <taxon>African swine fever virus</taxon>
    </lineage>
</organism>
<evidence type="ECO:0000250" key="1"/>
<evidence type="ECO:0000305" key="2"/>